<evidence type="ECO:0000255" key="1">
    <source>
        <dbReference type="HAMAP-Rule" id="MF_00052"/>
    </source>
</evidence>
<evidence type="ECO:0000255" key="2">
    <source>
        <dbReference type="PROSITE-ProRule" id="PRU01319"/>
    </source>
</evidence>
<name>RNH2_CERSK</name>
<gene>
    <name evidence="1" type="primary">rnhB</name>
    <name type="ordered locus">RSKD131_2860</name>
</gene>
<organism>
    <name type="scientific">Cereibacter sphaeroides (strain KD131 / KCTC 12085)</name>
    <name type="common">Rhodobacter sphaeroides</name>
    <dbReference type="NCBI Taxonomy" id="557760"/>
    <lineage>
        <taxon>Bacteria</taxon>
        <taxon>Pseudomonadati</taxon>
        <taxon>Pseudomonadota</taxon>
        <taxon>Alphaproteobacteria</taxon>
        <taxon>Rhodobacterales</taxon>
        <taxon>Paracoccaceae</taxon>
        <taxon>Cereibacter</taxon>
    </lineage>
</organism>
<protein>
    <recommendedName>
        <fullName evidence="1">Ribonuclease HII</fullName>
        <shortName evidence="1">RNase HII</shortName>
        <ecNumber evidence="1">3.1.26.4</ecNumber>
    </recommendedName>
</protein>
<feature type="chain" id="PRO_1000117682" description="Ribonuclease HII">
    <location>
        <begin position="1"/>
        <end position="212"/>
    </location>
</feature>
<feature type="domain" description="RNase H type-2" evidence="2">
    <location>
        <begin position="20"/>
        <end position="209"/>
    </location>
</feature>
<feature type="binding site" evidence="1">
    <location>
        <position position="26"/>
    </location>
    <ligand>
        <name>a divalent metal cation</name>
        <dbReference type="ChEBI" id="CHEBI:60240"/>
    </ligand>
</feature>
<feature type="binding site" evidence="1">
    <location>
        <position position="27"/>
    </location>
    <ligand>
        <name>a divalent metal cation</name>
        <dbReference type="ChEBI" id="CHEBI:60240"/>
    </ligand>
</feature>
<feature type="binding site" evidence="1">
    <location>
        <position position="117"/>
    </location>
    <ligand>
        <name>a divalent metal cation</name>
        <dbReference type="ChEBI" id="CHEBI:60240"/>
    </ligand>
</feature>
<proteinExistence type="inferred from homology"/>
<comment type="function">
    <text evidence="1">Endonuclease that specifically degrades the RNA of RNA-DNA hybrids.</text>
</comment>
<comment type="catalytic activity">
    <reaction evidence="1">
        <text>Endonucleolytic cleavage to 5'-phosphomonoester.</text>
        <dbReference type="EC" id="3.1.26.4"/>
    </reaction>
</comment>
<comment type="cofactor">
    <cofactor evidence="1">
        <name>Mn(2+)</name>
        <dbReference type="ChEBI" id="CHEBI:29035"/>
    </cofactor>
    <cofactor evidence="1">
        <name>Mg(2+)</name>
        <dbReference type="ChEBI" id="CHEBI:18420"/>
    </cofactor>
    <text evidence="1">Manganese or magnesium. Binds 1 divalent metal ion per monomer in the absence of substrate. May bind a second metal ion after substrate binding.</text>
</comment>
<comment type="subcellular location">
    <subcellularLocation>
        <location evidence="1">Cytoplasm</location>
    </subcellularLocation>
</comment>
<comment type="similarity">
    <text evidence="1">Belongs to the RNase HII family.</text>
</comment>
<reference key="1">
    <citation type="journal article" date="2009" name="J. Bacteriol.">
        <title>Complete genome sequence of Rhodobacter sphaeroides KD131.</title>
        <authorList>
            <person name="Lim S.-K."/>
            <person name="Kim S.J."/>
            <person name="Cha S.H."/>
            <person name="Oh Y.-K."/>
            <person name="Rhee H.-J."/>
            <person name="Kim M.-S."/>
            <person name="Lee J.K."/>
        </authorList>
    </citation>
    <scope>NUCLEOTIDE SEQUENCE [LARGE SCALE GENOMIC DNA]</scope>
    <source>
        <strain>KD131 / KCTC 12085</strain>
    </source>
</reference>
<sequence length="212" mass="22790">MEITCPDWTHETAALAEGFTCVVGVDEVGRGPLAGPVTAAAVRLFPGRIPEGLNDSKKLTAPRREMLAAEIHTVAEVSIAHASVEEIDRLNILQASHLAMGRALAGLPSRPDFALIDGHMVPKGLGHRCRAIVKGDALCLSIAAASIVAKVARDRIMVDLEQQHPGYGWRTNAGYGTKDHLQALLNLGPTPHHRRSFKPVHNILYQEASISP</sequence>
<accession>B9KRA6</accession>
<dbReference type="EC" id="3.1.26.4" evidence="1"/>
<dbReference type="EMBL" id="CP001150">
    <property type="protein sequence ID" value="ACM02720.1"/>
    <property type="molecule type" value="Genomic_DNA"/>
</dbReference>
<dbReference type="RefSeq" id="WP_002722129.1">
    <property type="nucleotide sequence ID" value="NC_011963.1"/>
</dbReference>
<dbReference type="SMR" id="B9KRA6"/>
<dbReference type="GeneID" id="67448233"/>
<dbReference type="KEGG" id="rsk:RSKD131_2860"/>
<dbReference type="HOGENOM" id="CLU_036532_3_2_5"/>
<dbReference type="GO" id="GO:0005737">
    <property type="term" value="C:cytoplasm"/>
    <property type="evidence" value="ECO:0007669"/>
    <property type="project" value="UniProtKB-SubCell"/>
</dbReference>
<dbReference type="GO" id="GO:0032299">
    <property type="term" value="C:ribonuclease H2 complex"/>
    <property type="evidence" value="ECO:0007669"/>
    <property type="project" value="TreeGrafter"/>
</dbReference>
<dbReference type="GO" id="GO:0030145">
    <property type="term" value="F:manganese ion binding"/>
    <property type="evidence" value="ECO:0007669"/>
    <property type="project" value="UniProtKB-UniRule"/>
</dbReference>
<dbReference type="GO" id="GO:0003723">
    <property type="term" value="F:RNA binding"/>
    <property type="evidence" value="ECO:0007669"/>
    <property type="project" value="InterPro"/>
</dbReference>
<dbReference type="GO" id="GO:0004523">
    <property type="term" value="F:RNA-DNA hybrid ribonuclease activity"/>
    <property type="evidence" value="ECO:0007669"/>
    <property type="project" value="UniProtKB-UniRule"/>
</dbReference>
<dbReference type="GO" id="GO:0043137">
    <property type="term" value="P:DNA replication, removal of RNA primer"/>
    <property type="evidence" value="ECO:0007669"/>
    <property type="project" value="TreeGrafter"/>
</dbReference>
<dbReference type="GO" id="GO:0006298">
    <property type="term" value="P:mismatch repair"/>
    <property type="evidence" value="ECO:0007669"/>
    <property type="project" value="TreeGrafter"/>
</dbReference>
<dbReference type="CDD" id="cd07182">
    <property type="entry name" value="RNase_HII_bacteria_HII_like"/>
    <property type="match status" value="1"/>
</dbReference>
<dbReference type="Gene3D" id="3.30.420.10">
    <property type="entry name" value="Ribonuclease H-like superfamily/Ribonuclease H"/>
    <property type="match status" value="1"/>
</dbReference>
<dbReference type="HAMAP" id="MF_00052_B">
    <property type="entry name" value="RNase_HII_B"/>
    <property type="match status" value="1"/>
</dbReference>
<dbReference type="InterPro" id="IPR022898">
    <property type="entry name" value="RNase_HII"/>
</dbReference>
<dbReference type="InterPro" id="IPR001352">
    <property type="entry name" value="RNase_HII/HIII"/>
</dbReference>
<dbReference type="InterPro" id="IPR024567">
    <property type="entry name" value="RNase_HII/HIII_dom"/>
</dbReference>
<dbReference type="InterPro" id="IPR012337">
    <property type="entry name" value="RNaseH-like_sf"/>
</dbReference>
<dbReference type="InterPro" id="IPR036397">
    <property type="entry name" value="RNaseH_sf"/>
</dbReference>
<dbReference type="NCBIfam" id="NF000595">
    <property type="entry name" value="PRK00015.1-3"/>
    <property type="match status" value="1"/>
</dbReference>
<dbReference type="PANTHER" id="PTHR10954">
    <property type="entry name" value="RIBONUCLEASE H2 SUBUNIT A"/>
    <property type="match status" value="1"/>
</dbReference>
<dbReference type="PANTHER" id="PTHR10954:SF18">
    <property type="entry name" value="RIBONUCLEASE HII"/>
    <property type="match status" value="1"/>
</dbReference>
<dbReference type="Pfam" id="PF01351">
    <property type="entry name" value="RNase_HII"/>
    <property type="match status" value="1"/>
</dbReference>
<dbReference type="SUPFAM" id="SSF53098">
    <property type="entry name" value="Ribonuclease H-like"/>
    <property type="match status" value="1"/>
</dbReference>
<dbReference type="PROSITE" id="PS51975">
    <property type="entry name" value="RNASE_H_2"/>
    <property type="match status" value="1"/>
</dbReference>
<keyword id="KW-0963">Cytoplasm</keyword>
<keyword id="KW-0255">Endonuclease</keyword>
<keyword id="KW-0378">Hydrolase</keyword>
<keyword id="KW-0464">Manganese</keyword>
<keyword id="KW-0479">Metal-binding</keyword>
<keyword id="KW-0540">Nuclease</keyword>